<reference key="1">
    <citation type="journal article" date="2005" name="Science">
        <title>The transcriptional landscape of the mammalian genome.</title>
        <authorList>
            <person name="Carninci P."/>
            <person name="Kasukawa T."/>
            <person name="Katayama S."/>
            <person name="Gough J."/>
            <person name="Frith M.C."/>
            <person name="Maeda N."/>
            <person name="Oyama R."/>
            <person name="Ravasi T."/>
            <person name="Lenhard B."/>
            <person name="Wells C."/>
            <person name="Kodzius R."/>
            <person name="Shimokawa K."/>
            <person name="Bajic V.B."/>
            <person name="Brenner S.E."/>
            <person name="Batalov S."/>
            <person name="Forrest A.R."/>
            <person name="Zavolan M."/>
            <person name="Davis M.J."/>
            <person name="Wilming L.G."/>
            <person name="Aidinis V."/>
            <person name="Allen J.E."/>
            <person name="Ambesi-Impiombato A."/>
            <person name="Apweiler R."/>
            <person name="Aturaliya R.N."/>
            <person name="Bailey T.L."/>
            <person name="Bansal M."/>
            <person name="Baxter L."/>
            <person name="Beisel K.W."/>
            <person name="Bersano T."/>
            <person name="Bono H."/>
            <person name="Chalk A.M."/>
            <person name="Chiu K.P."/>
            <person name="Choudhary V."/>
            <person name="Christoffels A."/>
            <person name="Clutterbuck D.R."/>
            <person name="Crowe M.L."/>
            <person name="Dalla E."/>
            <person name="Dalrymple B.P."/>
            <person name="de Bono B."/>
            <person name="Della Gatta G."/>
            <person name="di Bernardo D."/>
            <person name="Down T."/>
            <person name="Engstrom P."/>
            <person name="Fagiolini M."/>
            <person name="Faulkner G."/>
            <person name="Fletcher C.F."/>
            <person name="Fukushima T."/>
            <person name="Furuno M."/>
            <person name="Futaki S."/>
            <person name="Gariboldi M."/>
            <person name="Georgii-Hemming P."/>
            <person name="Gingeras T.R."/>
            <person name="Gojobori T."/>
            <person name="Green R.E."/>
            <person name="Gustincich S."/>
            <person name="Harbers M."/>
            <person name="Hayashi Y."/>
            <person name="Hensch T.K."/>
            <person name="Hirokawa N."/>
            <person name="Hill D."/>
            <person name="Huminiecki L."/>
            <person name="Iacono M."/>
            <person name="Ikeo K."/>
            <person name="Iwama A."/>
            <person name="Ishikawa T."/>
            <person name="Jakt M."/>
            <person name="Kanapin A."/>
            <person name="Katoh M."/>
            <person name="Kawasawa Y."/>
            <person name="Kelso J."/>
            <person name="Kitamura H."/>
            <person name="Kitano H."/>
            <person name="Kollias G."/>
            <person name="Krishnan S.P."/>
            <person name="Kruger A."/>
            <person name="Kummerfeld S.K."/>
            <person name="Kurochkin I.V."/>
            <person name="Lareau L.F."/>
            <person name="Lazarevic D."/>
            <person name="Lipovich L."/>
            <person name="Liu J."/>
            <person name="Liuni S."/>
            <person name="McWilliam S."/>
            <person name="Madan Babu M."/>
            <person name="Madera M."/>
            <person name="Marchionni L."/>
            <person name="Matsuda H."/>
            <person name="Matsuzawa S."/>
            <person name="Miki H."/>
            <person name="Mignone F."/>
            <person name="Miyake S."/>
            <person name="Morris K."/>
            <person name="Mottagui-Tabar S."/>
            <person name="Mulder N."/>
            <person name="Nakano N."/>
            <person name="Nakauchi H."/>
            <person name="Ng P."/>
            <person name="Nilsson R."/>
            <person name="Nishiguchi S."/>
            <person name="Nishikawa S."/>
            <person name="Nori F."/>
            <person name="Ohara O."/>
            <person name="Okazaki Y."/>
            <person name="Orlando V."/>
            <person name="Pang K.C."/>
            <person name="Pavan W.J."/>
            <person name="Pavesi G."/>
            <person name="Pesole G."/>
            <person name="Petrovsky N."/>
            <person name="Piazza S."/>
            <person name="Reed J."/>
            <person name="Reid J.F."/>
            <person name="Ring B.Z."/>
            <person name="Ringwald M."/>
            <person name="Rost B."/>
            <person name="Ruan Y."/>
            <person name="Salzberg S.L."/>
            <person name="Sandelin A."/>
            <person name="Schneider C."/>
            <person name="Schoenbach C."/>
            <person name="Sekiguchi K."/>
            <person name="Semple C.A."/>
            <person name="Seno S."/>
            <person name="Sessa L."/>
            <person name="Sheng Y."/>
            <person name="Shibata Y."/>
            <person name="Shimada H."/>
            <person name="Shimada K."/>
            <person name="Silva D."/>
            <person name="Sinclair B."/>
            <person name="Sperling S."/>
            <person name="Stupka E."/>
            <person name="Sugiura K."/>
            <person name="Sultana R."/>
            <person name="Takenaka Y."/>
            <person name="Taki K."/>
            <person name="Tammoja K."/>
            <person name="Tan S.L."/>
            <person name="Tang S."/>
            <person name="Taylor M.S."/>
            <person name="Tegner J."/>
            <person name="Teichmann S.A."/>
            <person name="Ueda H.R."/>
            <person name="van Nimwegen E."/>
            <person name="Verardo R."/>
            <person name="Wei C.L."/>
            <person name="Yagi K."/>
            <person name="Yamanishi H."/>
            <person name="Zabarovsky E."/>
            <person name="Zhu S."/>
            <person name="Zimmer A."/>
            <person name="Hide W."/>
            <person name="Bult C."/>
            <person name="Grimmond S.M."/>
            <person name="Teasdale R.D."/>
            <person name="Liu E.T."/>
            <person name="Brusic V."/>
            <person name="Quackenbush J."/>
            <person name="Wahlestedt C."/>
            <person name="Mattick J.S."/>
            <person name="Hume D.A."/>
            <person name="Kai C."/>
            <person name="Sasaki D."/>
            <person name="Tomaru Y."/>
            <person name="Fukuda S."/>
            <person name="Kanamori-Katayama M."/>
            <person name="Suzuki M."/>
            <person name="Aoki J."/>
            <person name="Arakawa T."/>
            <person name="Iida J."/>
            <person name="Imamura K."/>
            <person name="Itoh M."/>
            <person name="Kato T."/>
            <person name="Kawaji H."/>
            <person name="Kawagashira N."/>
            <person name="Kawashima T."/>
            <person name="Kojima M."/>
            <person name="Kondo S."/>
            <person name="Konno H."/>
            <person name="Nakano K."/>
            <person name="Ninomiya N."/>
            <person name="Nishio T."/>
            <person name="Okada M."/>
            <person name="Plessy C."/>
            <person name="Shibata K."/>
            <person name="Shiraki T."/>
            <person name="Suzuki S."/>
            <person name="Tagami M."/>
            <person name="Waki K."/>
            <person name="Watahiki A."/>
            <person name="Okamura-Oho Y."/>
            <person name="Suzuki H."/>
            <person name="Kawai J."/>
            <person name="Hayashizaki Y."/>
        </authorList>
    </citation>
    <scope>NUCLEOTIDE SEQUENCE [LARGE SCALE MRNA] (ISOFORM SREBP-1A)</scope>
    <source>
        <strain>C57BL/6J</strain>
        <strain>NOD</strain>
        <tissue>Bone marrow</tissue>
        <tissue>Kidney</tissue>
        <tissue>Thymus</tissue>
    </source>
</reference>
<reference key="2">
    <citation type="journal article" date="2009" name="PLoS Biol.">
        <title>Lineage-specific biology revealed by a finished genome assembly of the mouse.</title>
        <authorList>
            <person name="Church D.M."/>
            <person name="Goodstadt L."/>
            <person name="Hillier L.W."/>
            <person name="Zody M.C."/>
            <person name="Goldstein S."/>
            <person name="She X."/>
            <person name="Bult C.J."/>
            <person name="Agarwala R."/>
            <person name="Cherry J.L."/>
            <person name="DiCuccio M."/>
            <person name="Hlavina W."/>
            <person name="Kapustin Y."/>
            <person name="Meric P."/>
            <person name="Maglott D."/>
            <person name="Birtle Z."/>
            <person name="Marques A.C."/>
            <person name="Graves T."/>
            <person name="Zhou S."/>
            <person name="Teague B."/>
            <person name="Potamousis K."/>
            <person name="Churas C."/>
            <person name="Place M."/>
            <person name="Herschleb J."/>
            <person name="Runnheim R."/>
            <person name="Forrest D."/>
            <person name="Amos-Landgraf J."/>
            <person name="Schwartz D.C."/>
            <person name="Cheng Z."/>
            <person name="Lindblad-Toh K."/>
            <person name="Eichler E.E."/>
            <person name="Ponting C.P."/>
        </authorList>
    </citation>
    <scope>NUCLEOTIDE SEQUENCE [LARGE SCALE GENOMIC DNA]</scope>
    <source>
        <strain>C57BL/6J</strain>
    </source>
</reference>
<reference key="3">
    <citation type="journal article" date="2004" name="Genome Res.">
        <title>The status, quality, and expansion of the NIH full-length cDNA project: the Mammalian Gene Collection (MGC).</title>
        <authorList>
            <consortium name="The MGC Project Team"/>
        </authorList>
    </citation>
    <scope>NUCLEOTIDE SEQUENCE [LARGE SCALE MRNA] (ISOFORM SREBP-1A)</scope>
    <source>
        <strain>C57BL/6J</strain>
        <strain>Czech II</strain>
        <tissue>Brain</tissue>
        <tissue>Mammary gland</tissue>
    </source>
</reference>
<reference key="4">
    <citation type="journal article" date="1997" name="J. Clin. Invest.">
        <title>Differential expression of exons 1a and 1c in mRNAs for sterol regulatory element binding protein-1 in human and mouse organs and cultured cells.</title>
        <authorList>
            <person name="Shimomura I."/>
            <person name="Shimano H."/>
            <person name="Horton J.D."/>
            <person name="Goldstein J.L."/>
            <person name="Brown M.S."/>
        </authorList>
    </citation>
    <scope>NUCLEOTIDE SEQUENCE [MRNA] OF 1-41 (ISOFORMS SREBP-1A AND SREBP-1C)</scope>
    <scope>TISSUE SPECIFICITY</scope>
    <source>
        <tissue>Liver</tissue>
    </source>
</reference>
<reference key="5">
    <citation type="journal article" date="1999" name="Biosci. Biotechnol. Biochem.">
        <title>A novel splicing isoform of mouse sterol regulatory element-binding protein-1 (SREBP-1).</title>
        <authorList>
            <person name="Inoue J."/>
            <person name="Sato R."/>
        </authorList>
    </citation>
    <scope>NUCLEOTIDE SEQUENCE [MRNA] OF 42-444 (ISOFORMS SREBP-1A-W42 AND SREBP-1C-W42)</scope>
</reference>
<reference key="6">
    <citation type="submission" date="2001-04" db="EMBL/GenBank/DDBJ databases">
        <title>Mouse Srebp1.</title>
        <authorList>
            <person name="Lloyd D.J."/>
            <person name="Shackleton S."/>
            <person name="Trembath R.C."/>
        </authorList>
    </citation>
    <scope>NUCLEOTIDE SEQUENCE [MRNA] OF 55-1134</scope>
</reference>
<reference key="7">
    <citation type="journal article" date="1996" name="J. Clin. Invest.">
        <title>Overproduction of cholesterol and fatty acids causes massive liver enlargement in transgenic mice expressing truncated SREBP-1a.</title>
        <authorList>
            <person name="Shimano H."/>
            <person name="Horton J.D."/>
            <person name="Hammer R.E."/>
            <person name="Shimomura I."/>
            <person name="Brown M.S."/>
            <person name="Goldstein J.L."/>
        </authorList>
    </citation>
    <scope>FUNCTION (ISOFORM SREBP-1A)</scope>
    <scope>SUBCELLULAR LOCATION</scope>
</reference>
<reference key="8">
    <citation type="journal article" date="1997" name="J. Clin. Invest.">
        <title>Isoform 1c of sterol regulatory element binding protein is less active than isoform 1a in livers of transgenic mice and in cultured cells.</title>
        <authorList>
            <person name="Shimano H."/>
            <person name="Horton J.D."/>
            <person name="Shimomura I."/>
            <person name="Hammer R.E."/>
            <person name="Brown M.S."/>
            <person name="Goldstein J.L."/>
        </authorList>
    </citation>
    <scope>FUNCTION (ISOFORM SREBP-1C)</scope>
    <scope>SUBCELLULAR LOCATION</scope>
</reference>
<reference key="9">
    <citation type="journal article" date="1997" name="J. Clin. Invest.">
        <title>Elevated levels of SREBP-2 and cholesterol synthesis in livers of mice homozygous for a targeted disruption of the SREBP-1 gene.</title>
        <authorList>
            <person name="Shimano H."/>
            <person name="Shimomura I."/>
            <person name="Hammer R.E."/>
            <person name="Herz J."/>
            <person name="Goldstein J.L."/>
            <person name="Brown M.S."/>
            <person name="Horton J.D."/>
        </authorList>
    </citation>
    <scope>FUNCTION</scope>
    <scope>DISRUPTION PHENOTYPE</scope>
</reference>
<reference key="10">
    <citation type="journal article" date="1998" name="Genes Dev.">
        <title>Insulin resistance and diabetes mellitus in transgenic mice expressing nuclear SREBP-1c in adipose tissue: model for congenital generalized lipodystrophy.</title>
        <authorList>
            <person name="Shimomura I."/>
            <person name="Hammer R.E."/>
            <person name="Richardson J.A."/>
            <person name="Ikemoto S."/>
            <person name="Bashmakov Y."/>
            <person name="Goldstein J.L."/>
            <person name="Brown M.S."/>
        </authorList>
    </citation>
    <scope>FUNCTION</scope>
</reference>
<reference key="11">
    <citation type="journal article" date="2002" name="Hum. Mol. Genet.">
        <title>A novel interaction between lamin A and SREBP1: implications for partial lipodystrophy and other laminopathies.</title>
        <authorList>
            <person name="Lloyd D.J."/>
            <person name="Trembath R.C."/>
            <person name="Shackleton S."/>
        </authorList>
    </citation>
    <scope>INTERACTION WITH LMNA</scope>
</reference>
<reference key="12">
    <citation type="journal article" date="2002" name="J. Biol. Chem.">
        <title>Diminished hepatic response to fasting/refeeding and liver X receptor agonists in mice with selective deficiency of sterol regulatory element-binding protein-1c.</title>
        <authorList>
            <person name="Liang G."/>
            <person name="Yang J."/>
            <person name="Horton J.D."/>
            <person name="Hammer R.E."/>
            <person name="Goldstein J.L."/>
            <person name="Brown M.S."/>
        </authorList>
    </citation>
    <scope>FUNCTION</scope>
    <scope>DISRUPTION PHENOTYPE</scope>
</reference>
<reference key="13">
    <citation type="journal article" date="2003" name="J. Biol. Chem.">
        <title>Overexpression of sterol regulatory element-binding protein-1a in mouse adipose tissue produces adipocyte hypertrophy, increased fatty acid secretion, and fatty liver.</title>
        <authorList>
            <person name="Horton J.D."/>
            <person name="Shimomura I."/>
            <person name="Ikemoto S."/>
            <person name="Bashmakov Y."/>
            <person name="Hammer R.E."/>
        </authorList>
    </citation>
    <scope>FUNCTION</scope>
</reference>
<reference key="14">
    <citation type="journal article" date="2005" name="J. Clin. Invest.">
        <title>Schoenheimer effect explained--feedback regulation of cholesterol synthesis in mice mediated by Insig proteins.</title>
        <authorList>
            <person name="Engelking L.J."/>
            <person name="Liang G."/>
            <person name="Hammer R.E."/>
            <person name="Takaishi K."/>
            <person name="Kuriyama H."/>
            <person name="Evers B.M."/>
            <person name="Li W.P."/>
            <person name="Horton J.D."/>
            <person name="Goldstein J.L."/>
            <person name="Brown M.S."/>
        </authorList>
    </citation>
    <scope>FUNCTION</scope>
</reference>
<reference key="15">
    <citation type="journal article" date="2007" name="EMBO J.">
        <title>Distinct C/EBPalpha motifs regulate lipogenic and gluconeogenic gene expression in vivo.</title>
        <authorList>
            <person name="Pedersen T.A."/>
            <person name="Bereshchenko O."/>
            <person name="Garcia-Silva S."/>
            <person name="Ermakova O."/>
            <person name="Kurz E."/>
            <person name="Mandrup S."/>
            <person name="Porse B.T."/>
            <person name="Nerlov C."/>
        </authorList>
    </citation>
    <scope>FUNCTION</scope>
    <scope>INTERACTION WITH CEBPA</scope>
</reference>
<reference key="16">
    <citation type="journal article" date="2009" name="J. Biol. Chem.">
        <title>Salt-inducible kinase regulates hepatic lipogenesis by controlling SREBP-1c phosphorylation.</title>
        <authorList>
            <person name="Yoon Y.S."/>
            <person name="Seo W.Y."/>
            <person name="Lee M.W."/>
            <person name="Kim S.T."/>
            <person name="Koo S.H."/>
        </authorList>
    </citation>
    <scope>FUNCTION</scope>
    <scope>PHOSPHORYLATION AT SER-331; SER-332 AND SER-395</scope>
    <scope>MUTAGENESIS OF SER-331; SER-332 AND SER-395</scope>
</reference>
<reference key="17">
    <citation type="journal article" date="2009" name="Mol. Pharmacol.">
        <title>The basic helix-loop-helix proteins differentiated embryo chondrocyte (DEC) 1 and DEC2 function as corepressors of retinoid X receptors.</title>
        <authorList>
            <person name="Cho Y."/>
            <person name="Noshiro M."/>
            <person name="Choi M."/>
            <person name="Morita K."/>
            <person name="Kawamoto T."/>
            <person name="Fujimoto K."/>
            <person name="Kato Y."/>
            <person name="Makishima M."/>
        </authorList>
    </citation>
    <scope>INDUCTION</scope>
</reference>
<reference key="18">
    <citation type="journal article" date="2010" name="Cell">
        <title>A tissue-specific atlas of mouse protein phosphorylation and expression.</title>
        <authorList>
            <person name="Huttlin E.L."/>
            <person name="Jedrychowski M.P."/>
            <person name="Elias J.E."/>
            <person name="Goswami T."/>
            <person name="Rad R."/>
            <person name="Beausoleil S.A."/>
            <person name="Villen J."/>
            <person name="Haas W."/>
            <person name="Sowa M.E."/>
            <person name="Gygi S.P."/>
        </authorList>
    </citation>
    <scope>PHOSPHORYLATION [LARGE SCALE ANALYSIS] AT SER-448</scope>
    <scope>IDENTIFICATION BY MASS SPECTROMETRY [LARGE SCALE ANALYSIS]</scope>
    <source>
        <tissue>Liver</tissue>
    </source>
</reference>
<reference key="19">
    <citation type="journal article" date="2011" name="Cell Metab.">
        <title>AMPK phosphorylates and inhibits SREBP activity to attenuate hepatic steatosis and atherosclerosis in diet-induced insulin-resistant mice.</title>
        <authorList>
            <person name="Li Y."/>
            <person name="Xu S."/>
            <person name="Mihaylova M.M."/>
            <person name="Zheng B."/>
            <person name="Hou X."/>
            <person name="Jiang B."/>
            <person name="Park O."/>
            <person name="Luo Z."/>
            <person name="Lefai E."/>
            <person name="Shyy J.Y."/>
            <person name="Gao B."/>
            <person name="Wierzbicki M."/>
            <person name="Verbeuren T.J."/>
            <person name="Shaw R.J."/>
            <person name="Cohen R.A."/>
            <person name="Zang M."/>
        </authorList>
    </citation>
    <scope>FUNCTION</scope>
    <scope>PHOSPHORYLATION AT SER-389</scope>
    <scope>SUBCELLULAR LOCATION</scope>
    <scope>MUTAGENESIS OF SER-354 AND SER-389</scope>
</reference>
<reference key="20">
    <citation type="journal article" date="2011" name="Cell Metab.">
        <title>Linking lipid metabolism to the innate immune response in macrophages through sterol regulatory element binding protein-1a.</title>
        <authorList>
            <person name="Im S.S."/>
            <person name="Yousef L."/>
            <person name="Blaschitz C."/>
            <person name="Liu J.Z."/>
            <person name="Edwards R.A."/>
            <person name="Young S.G."/>
            <person name="Raffatellu M."/>
            <person name="Osborne T.F."/>
        </authorList>
    </citation>
    <scope>FUNCTION (ISOFORM SREBP-1A)</scope>
    <scope>TISSUE SPECIFICITY</scope>
    <scope>DISRUPTION PHENOTYPE (ISOFORM SREBP-1A)</scope>
</reference>
<reference key="21">
    <citation type="journal article" date="2012" name="Hepatology">
        <title>Antagonism of peripheral hepatic cannabinoid receptor-1 improves liver lipid metabolism in mice: evidence from cultured explants.</title>
        <authorList>
            <person name="Jourdan T."/>
            <person name="Demizieux L."/>
            <person name="Gresti J."/>
            <person name="Djaouti L."/>
            <person name="Gaba L."/>
            <person name="Verges B."/>
            <person name="Degrace P."/>
        </authorList>
    </citation>
    <scope>INDUCTION BY ENDOCANNABINOID ANANDAMIDE</scope>
</reference>
<reference key="22">
    <citation type="journal article" date="2015" name="Nat. Commun.">
        <title>PAQR3 modulates cholesterol homeostasis by anchoring Scap/SREBP complex to the Golgi apparatus.</title>
        <authorList>
            <person name="Xu D."/>
            <person name="Wang Z."/>
            <person name="Zhang Y."/>
            <person name="Jiang W."/>
            <person name="Pan Y."/>
            <person name="Song B.L."/>
            <person name="Chen Y."/>
        </authorList>
    </citation>
    <scope>INTERACTION WITH PAQR3</scope>
</reference>
<reference key="23">
    <citation type="journal article" date="2017" name="Nat. Rev. Endocrinol.">
        <title>SREBP-regulated lipid metabolism: convergent physiology - divergent pathophysiology.</title>
        <authorList>
            <person name="Shimano H."/>
            <person name="Sato R."/>
        </authorList>
    </citation>
    <scope>REVIEW</scope>
</reference>
<reference key="24">
    <citation type="journal article" date="2023" name="Hepatology">
        <title>Hepatic mitochondrial NAD + transporter SLC25A47 activates AMPKalpha mediating lipid metabolism and tumorigenesis.</title>
        <authorList>
            <person name="Cheng L."/>
            <person name="Deepak R.N.V.K."/>
            <person name="Wang G."/>
            <person name="Meng Z."/>
            <person name="Tao L."/>
            <person name="Xie M."/>
            <person name="Chi W."/>
            <person name="Zhang Y."/>
            <person name="Yang M."/>
            <person name="Liao Y."/>
            <person name="Chen R."/>
            <person name="Liang Y."/>
            <person name="Zhang J."/>
            <person name="Huang Y."/>
            <person name="Wang W."/>
            <person name="Guo Z."/>
            <person name="Wang Y."/>
            <person name="Lin J.D."/>
            <person name="Fan H."/>
            <person name="Chen L."/>
        </authorList>
    </citation>
    <scope>ACTIVITY REGULATION</scope>
</reference>
<reference key="25">
    <citation type="journal article" date="2024" name="J. Biol. Chem.">
        <title>ARMC5 selectively degrades SCAP-free SREBF1 and is essential for fatty acid desaturation in adipocytes.</title>
        <authorList>
            <person name="Uota A."/>
            <person name="Okuno Y."/>
            <person name="Fukuhara A."/>
            <person name="Sasaki S."/>
            <person name="Kobayashi S."/>
            <person name="Shimomura I."/>
        </authorList>
    </citation>
    <scope>UBIQUITINATION</scope>
</reference>
<protein>
    <recommendedName>
        <fullName evidence="25 28">Sterol regulatory element-binding protein 1</fullName>
        <shortName evidence="25 28">SREBP-1</shortName>
    </recommendedName>
    <alternativeName>
        <fullName evidence="25 28">Sterol regulatory element-binding transcription factor 1</fullName>
    </alternativeName>
    <component>
        <recommendedName>
            <fullName evidence="30">Processed sterol regulatory element-binding protein 1</fullName>
        </recommendedName>
        <alternativeName>
            <fullName evidence="30">Transcription factor SREBF1</fullName>
        </alternativeName>
    </component>
</protein>
<feature type="chain" id="PRO_0000127448" description="Sterol regulatory element-binding protein 1">
    <location>
        <begin position="1"/>
        <end position="1134"/>
    </location>
</feature>
<feature type="chain" id="PRO_0000314030" description="Processed sterol regulatory element-binding protein 1" evidence="3">
    <location>
        <begin position="1"/>
        <end position="480"/>
    </location>
</feature>
<feature type="topological domain" description="Cytoplasmic" evidence="4">
    <location>
        <begin position="1"/>
        <end position="477"/>
    </location>
</feature>
<feature type="transmembrane region" description="Helical" evidence="4">
    <location>
        <begin position="478"/>
        <end position="498"/>
    </location>
</feature>
<feature type="topological domain" description="Lumenal" evidence="4">
    <location>
        <begin position="499"/>
        <end position="536"/>
    </location>
</feature>
<feature type="transmembrane region" description="Helical" evidence="4">
    <location>
        <begin position="537"/>
        <end position="557"/>
    </location>
</feature>
<feature type="topological domain" description="Cytoplasmic" evidence="4">
    <location>
        <begin position="558"/>
        <end position="1134"/>
    </location>
</feature>
<feature type="domain" description="bHLH" evidence="5">
    <location>
        <begin position="317"/>
        <end position="367"/>
    </location>
</feature>
<feature type="region of interest" description="Transcriptional activation (acidic)" evidence="1">
    <location>
        <begin position="1"/>
        <end position="60"/>
    </location>
</feature>
<feature type="region of interest" description="Disordered" evidence="6">
    <location>
        <begin position="46"/>
        <end position="73"/>
    </location>
</feature>
<feature type="region of interest" description="Disordered" evidence="6">
    <location>
        <begin position="130"/>
        <end position="149"/>
    </location>
</feature>
<feature type="region of interest" description="Disordered" evidence="6">
    <location>
        <begin position="170"/>
        <end position="195"/>
    </location>
</feature>
<feature type="region of interest" description="Interaction with LMNA" evidence="8">
    <location>
        <begin position="227"/>
        <end position="487"/>
    </location>
</feature>
<feature type="region of interest" description="Leucine-zipper">
    <location>
        <begin position="367"/>
        <end position="388"/>
    </location>
</feature>
<feature type="region of interest" description="Disordered" evidence="6">
    <location>
        <begin position="415"/>
        <end position="468"/>
    </location>
</feature>
<feature type="short sequence motif" description="9aaTAD" evidence="1">
    <location>
        <begin position="27"/>
        <end position="35"/>
    </location>
</feature>
<feature type="compositionally biased region" description="Polar residues" evidence="6">
    <location>
        <begin position="59"/>
        <end position="69"/>
    </location>
</feature>
<feature type="compositionally biased region" description="Polar residues" evidence="6">
    <location>
        <begin position="170"/>
        <end position="179"/>
    </location>
</feature>
<feature type="compositionally biased region" description="Low complexity" evidence="6">
    <location>
        <begin position="424"/>
        <end position="453"/>
    </location>
</feature>
<feature type="site" description="Cleavage; by caspase-3 and caspase-7" evidence="3">
    <location>
        <begin position="451"/>
        <end position="452"/>
    </location>
</feature>
<feature type="site" description="Cleavage; by MBTPS2" evidence="3">
    <location>
        <begin position="480"/>
        <end position="481"/>
    </location>
</feature>
<feature type="site" description="Cleavage; by MBTPS1" evidence="1">
    <location>
        <begin position="519"/>
        <end position="520"/>
    </location>
</feature>
<feature type="modified residue" description="Phosphoserine" evidence="2">
    <location>
        <position position="96"/>
    </location>
</feature>
<feature type="modified residue" description="Phosphoserine" evidence="1">
    <location>
        <position position="115"/>
    </location>
</feature>
<feature type="modified residue" description="Phosphoserine; by SIK1" evidence="12">
    <location>
        <position position="331"/>
    </location>
</feature>
<feature type="modified residue" description="Phosphoserine; by SIK1" evidence="12">
    <location>
        <position position="332"/>
    </location>
</feature>
<feature type="modified residue" description="Phosphoserine; by AMPK" evidence="14">
    <location>
        <position position="389"/>
    </location>
</feature>
<feature type="modified residue" description="Phosphoserine; by SIK1" evidence="12">
    <location>
        <position position="395"/>
    </location>
</feature>
<feature type="modified residue" description="Phosphoserine" evidence="32">
    <location>
        <position position="448"/>
    </location>
</feature>
<feature type="modified residue" description="Phosphoserine" evidence="1">
    <location>
        <position position="1047"/>
    </location>
</feature>
<feature type="splice variant" id="VSP_002151" description="In isoform SREBP-1C and isoform SREBP-1C-W42." evidence="25 28">
    <original>MDELAFGEAALEQTLAEMCELDTAVLNDI</original>
    <variation>MDCTF</variation>
    <location>
        <begin position="1"/>
        <end position="29"/>
    </location>
</feature>
<feature type="splice variant" id="VSP_002152" description="In isoform SREBP-1A-W42 and isoform SREBP-1C-W42." evidence="25">
    <location>
        <begin position="90"/>
        <end position="131"/>
    </location>
</feature>
<feature type="mutagenesis site" description="Weakly affects phosphorylation by SIK1." evidence="12">
    <original>S</original>
    <variation>A</variation>
    <location>
        <position position="331"/>
    </location>
</feature>
<feature type="mutagenesis site" description="Weakly affects phosphorylation by SIK1." evidence="12">
    <original>S</original>
    <variation>A</variation>
    <location>
        <position position="332"/>
    </location>
</feature>
<feature type="mutagenesis site" description="Does not affect AMPK-mediated phosphorylation." evidence="14">
    <original>S</original>
    <variation>A</variation>
    <location>
        <position position="354"/>
    </location>
</feature>
<feature type="mutagenesis site" description="Abolishes AMPK-mediated phosphorylation." evidence="14">
    <original>S</original>
    <variation>A</variation>
    <location>
        <position position="389"/>
    </location>
</feature>
<feature type="mutagenesis site" description="Strongly impairs affects phosphorylation by SIK1." evidence="12">
    <original>S</original>
    <variation>A</variation>
    <location>
        <position position="395"/>
    </location>
</feature>
<feature type="sequence conflict" description="In Ref. 1; BAE32576 and 6; AAK54762." evidence="30" ref="1 6">
    <location>
        <begin position="272"/>
        <end position="276"/>
    </location>
</feature>
<feature type="sequence conflict" description="In Ref. 1; BAE29268." evidence="30" ref="1">
    <original>R</original>
    <variation>P</variation>
    <location>
        <position position="795"/>
    </location>
</feature>
<feature type="sequence conflict" description="In Ref. 3; AAH06051." evidence="30" ref="3">
    <original>H</original>
    <variation>N</variation>
    <location>
        <position position="1003"/>
    </location>
</feature>
<feature type="sequence conflict" description="In Ref. 3; AAH06051." evidence="30" ref="3">
    <original>T</original>
    <variation>A</variation>
    <location>
        <position position="1061"/>
    </location>
</feature>
<keyword id="KW-0010">Activator</keyword>
<keyword id="KW-0025">Alternative splicing</keyword>
<keyword id="KW-0153">Cholesterol metabolism</keyword>
<keyword id="KW-0968">Cytoplasmic vesicle</keyword>
<keyword id="KW-0238">DNA-binding</keyword>
<keyword id="KW-0256">Endoplasmic reticulum</keyword>
<keyword id="KW-0333">Golgi apparatus</keyword>
<keyword id="KW-0443">Lipid metabolism</keyword>
<keyword id="KW-0472">Membrane</keyword>
<keyword id="KW-0539">Nucleus</keyword>
<keyword id="KW-0597">Phosphoprotein</keyword>
<keyword id="KW-1185">Reference proteome</keyword>
<keyword id="KW-0753">Steroid metabolism</keyword>
<keyword id="KW-1207">Sterol metabolism</keyword>
<keyword id="KW-0804">Transcription</keyword>
<keyword id="KW-0805">Transcription regulation</keyword>
<keyword id="KW-0812">Transmembrane</keyword>
<keyword id="KW-1133">Transmembrane helix</keyword>
<keyword id="KW-0832">Ubl conjugation</keyword>
<gene>
    <name evidence="31" type="primary">Srebf1</name>
    <name evidence="25 28" type="synonym">Srebp1</name>
</gene>
<comment type="function">
    <molecule>Sterol regulatory element-binding protein 1</molecule>
    <text evidence="7 9 10 12">Precursor of the transcription factor form (Processed sterol regulatory element-binding protein 1), which is embedded in the endoplasmic reticulum membrane (PubMed:11782483, PubMed:12855691, PubMed:19244231). Low sterol concentrations promote processing of this form, releasing the transcription factor form that translocates into the nucleus and activates transcription of genes involved in cholesterol biosynthesis and lipid homeostasis (PubMed:11782483, PubMed:12855691, PubMed:16100574, PubMed:19244231).</text>
</comment>
<comment type="function">
    <molecule>Processed sterol regulatory element-binding protein 1</molecule>
    <text evidence="1 11 12 14 23 24">Key transcription factor that regulates expression of genes involved in cholesterol biosynthesis and lipid homeostasis (PubMed:17290224, PubMed:19244231, PubMed:21459323, PubMed:9329978, PubMed:9784493). Binds to the sterol regulatory element 1 (SRE-1) (5'-ATCACCCCAC-3') (By similarity). Has dual sequence specificity binding to both an E-box motif (5'-ATCACGTGA-3') and to SRE-1 (5'-ATCACCCCAC-3') (By similarity). Regulates the promoters of genes involved in cholesterol biosynthesis and the LDL receptor (LDLR) pathway of sterol regulation (PubMed:17290224, PubMed:19244231, PubMed:21459323, PubMed:9329978, PubMed:9784493).</text>
</comment>
<comment type="function">
    <molecule>Isoform SREBP-1A</molecule>
    <text evidence="9 15 20 22">Isoform expressed only in select tissues, which has higher transcriptional activity compared to SREBP-1C (PubMed:12855691, PubMed:21531336). Able to stimulate both lipogenic and cholesterogenic gene expression (PubMed:8833906). Has a role in the nutritional regulation of fatty acids and triglycerides in lipogenic organs such as the liver (PubMed:12855691, PubMed:9062341). Required for innate immune response in macrophages by regulating lipid metabolism (PubMed:21531336).</text>
</comment>
<comment type="function">
    <molecule>Isoform SREBP-1C</molecule>
    <text evidence="9 15 20 22">Predominant isoform expressed in most tissues, which has weaker transcriptional activity compared to isoform SREBP-1A (PubMed:12855691, PubMed:21531336). Primarily controls expression of lipogenic gene (PubMed:8833906, PubMed:9062341). Strongly activates global lipid synthesis in rapidly growing cells (PubMed:8833906, PubMed:9062341).</text>
</comment>
<comment type="activity regulation">
    <text evidence="18">Activation by cleavage is down-regulated upon activation of SIRT3-dependent PRKAA1/AMPK-alpha signaling cascade which leads to inhibition of ATP-consuming lipogenesis to restore cellular energy balance.</text>
</comment>
<comment type="subunit">
    <molecule>Sterol regulatory element-binding protein 1</molecule>
    <text evidence="1 17">Forms a tight complex with SCAP, the SCAP-SREBP complex, in the endoplasmic reticulum membrane and the Golgi apparatus (By similarity). Interacts with PAQR3; the interaction anchors the SCAP-SREBP complex to the Golgi apparatus in low cholesterol conditions (PubMed:26311497).</text>
</comment>
<comment type="subunit">
    <molecule>Processed sterol regulatory element-binding protein 1</molecule>
    <text evidence="1 8 11">Efficient DNA binding of the soluble transcription factor fragment requires dimerization with another bHLH protein (By similarity). Interacts with CEBPA, the interaction produces a transcriptional synergy (PubMed:17290224). Interacts with LMNA (PubMed:11929849).</text>
</comment>
<comment type="interaction">
    <interactant intactId="EBI-5273743">
        <id>Q9WTN3</id>
    </interactant>
    <interactant intactId="EBI-1802585">
        <id>Q923E4</id>
        <label>Sirt1</label>
    </interactant>
    <organismsDiffer>false</organismsDiffer>
    <experiments>2</experiments>
</comment>
<comment type="subcellular location">
    <molecule>Sterol regulatory element-binding protein 1</molecule>
    <subcellularLocation>
        <location evidence="14">Endoplasmic reticulum membrane</location>
        <topology evidence="4">Multi-pass membrane protein</topology>
    </subcellularLocation>
    <subcellularLocation>
        <location evidence="14">Golgi apparatus membrane</location>
        <topology evidence="4">Multi-pass membrane protein</topology>
    </subcellularLocation>
    <subcellularLocation>
        <location evidence="14">Cytoplasmic vesicle</location>
        <location evidence="14">COPII-coated vesicle membrane</location>
        <topology evidence="4">Multi-pass membrane protein</topology>
    </subcellularLocation>
    <text evidence="14">At high sterol concentrations, the SCAP-SREBP is retained in the endoplasmic reticulum (PubMed:21459323). Low sterol concentrations promote recruitment into COPII-coated vesicles and transport of the SCAP-SREBP to the Golgi, where it is processed (PubMed:21459323).</text>
</comment>
<comment type="subcellular location">
    <molecule>Processed sterol regulatory element-binding protein 1</molecule>
    <subcellularLocation>
        <location evidence="14 20 22">Nucleus</location>
    </subcellularLocation>
</comment>
<comment type="alternative products">
    <event type="alternative splicing"/>
    <isoform>
        <id>Q9WTN3-1</id>
        <name evidence="26 27">SREBP-1A</name>
        <sequence type="displayed"/>
    </isoform>
    <isoform>
        <id>Q9WTN3-2</id>
        <name>SREBP-1A-W42</name>
        <sequence type="described" ref="VSP_002152"/>
    </isoform>
    <isoform>
        <id>Q9WTN3-3</id>
        <name evidence="29">SREBP-1C</name>
        <sequence type="described" ref="VSP_002151"/>
    </isoform>
    <isoform>
        <id>Q9WTN3-4</id>
        <name>SREBP-1C-W42</name>
        <sequence type="described" ref="VSP_002151 VSP_002152"/>
    </isoform>
    <text>Additional isoforms seem to exist.</text>
</comment>
<comment type="tissue specificity">
    <molecule>Isoform SREBP-1C</molecule>
    <text evidence="15 21">Predominant isoform expressed in most tissues (PubMed:21531336). Predominates in liver, adrenal gland, brain and adipose tissue (PubMed:9062340). Also found in kidney, thymus, testis, muscle, jejunum, and ileum (PubMed:9062340).</text>
</comment>
<comment type="tissue specificity">
    <molecule>Isoform SREBP-1A</molecule>
    <text evidence="15 21">Expressed only in select tissues, such as intestinal epithelial, heart, macrophage and bone marrow dendritic cells (PubMed:21531336, PubMed:9062340). Also found in kidney, thymus, testis, muscle, jejunum, and ileum (PubMed:9062340).</text>
</comment>
<comment type="induction">
    <molecule>Isoform SREBP-1C</molecule>
    <text evidence="13">Expressed in a circadian manner in the liver with a peak at ZT16 (PubMed:19786558).</text>
</comment>
<comment type="induction">
    <text evidence="16">Up-regulated by endocannabinoid anandamide/AEA.</text>
</comment>
<comment type="domain">
    <text evidence="1">The 9aaTAD motif is a transactivation domain present in a large number of yeast and animal transcription factors.</text>
</comment>
<comment type="PTM">
    <molecule>Sterol regulatory element-binding protein 1</molecule>
    <text evidence="1 3">Processed in the Golgi apparatus, releasing the protein from the membrane. At low cholesterol the SCAP-SREBP complex is recruited into COPII vesicles for export from the endoplasmic reticulum. In the Golgi, complex SREBPs are cleaved sequentially by site-1 (MBTPS1, S1P) and site-2 (MBTPS2, S2P) proteases (By similarity). The first cleavage by site-1 protease occurs within the luminal loop, the second cleavage by site-2 protease occurs within the first transmembrane domain, releasing the transcription factor from the Golgi membrane (By similarity).</text>
</comment>
<comment type="PTM">
    <text evidence="12 14">Phosphorylated by AMPK, leading to suppress protein processing and nuclear translocation, and repress target gene expression. Phosphorylation at Ser-389 by SIK1 represses activity possibly by inhibiting DNA-binding.</text>
</comment>
<comment type="PTM">
    <molecule>Sterol regulatory element-binding protein 1</molecule>
    <text evidence="19">SCAP-free SREBF1 is ubiquitinated by the BCR(ARMC5) complex, leading to its degradation.</text>
</comment>
<comment type="PTM">
    <molecule>Processed sterol regulatory element-binding protein 1</molecule>
    <text evidence="1">Ubiquitinated; the nuclear form has a rapid turnover and is rapidly ubiquitinated and degraded by the proteasome in the nucleus.</text>
</comment>
<comment type="disruption phenotype">
    <text evidence="23">Mice show high embryonic lethality around day 11 dpc (PubMed:9329978). Surviving mice show a 2-3-fold increase in processed Srebpf2 protein in liver nuclei, 3-fold increase in cholesterol synthesis and 50% increase in cholesterol content of the liver (PubMed:9329978).</text>
</comment>
<comment type="disruption phenotype">
    <molecule>Isoform SREBP-1A</molecule>
    <text evidence="15">Mice lacking isoform SREBP-1A are resistant to pro-inflammatory toxic shock (PubMed:21531336). Macrophages challenged with bacterial lipopolysaccharide fail to activate lipogenesis as well as hallmarks of inflammasome functions, activation of caspase-1 and secretion of IL1B (PubMed:21531336).</text>
</comment>
<comment type="disruption phenotype">
    <molecule>Isoform SREBP-1C</molecule>
    <text evidence="7">Mice lacking isoform SREBP-1C show a lack of up-regulation of several lipogenic enzymes in response to high insulin or LXR activation.</text>
</comment>
<comment type="similarity">
    <text evidence="30">Belongs to the SREBP family.</text>
</comment>
<dbReference type="EMBL" id="AK052628">
    <property type="protein sequence ID" value="BAC35068.1"/>
    <property type="molecule type" value="mRNA"/>
</dbReference>
<dbReference type="EMBL" id="AK150052">
    <property type="protein sequence ID" value="BAE29268.1"/>
    <property type="molecule type" value="mRNA"/>
</dbReference>
<dbReference type="EMBL" id="AK154424">
    <property type="protein sequence ID" value="BAE32576.1"/>
    <property type="molecule type" value="mRNA"/>
</dbReference>
<dbReference type="EMBL" id="AK169607">
    <property type="protein sequence ID" value="BAE41256.1"/>
    <property type="molecule type" value="mRNA"/>
</dbReference>
<dbReference type="EMBL" id="AL669954">
    <property type="status" value="NOT_ANNOTATED_CDS"/>
    <property type="molecule type" value="Genomic_DNA"/>
</dbReference>
<dbReference type="EMBL" id="BC006051">
    <property type="protein sequence ID" value="AAH06051.1"/>
    <property type="molecule type" value="mRNA"/>
</dbReference>
<dbReference type="EMBL" id="BC056922">
    <property type="protein sequence ID" value="AAH56922.1"/>
    <property type="molecule type" value="mRNA"/>
</dbReference>
<dbReference type="EMBL" id="AB017337">
    <property type="protein sequence ID" value="BAA74795.1"/>
    <property type="molecule type" value="mRNA"/>
</dbReference>
<dbReference type="EMBL" id="AF374266">
    <property type="protein sequence ID" value="AAK54762.1"/>
    <property type="molecule type" value="mRNA"/>
</dbReference>
<dbReference type="CCDS" id="CCDS24785.1">
    <molecule id="Q9WTN3-1"/>
</dbReference>
<dbReference type="PIR" id="PD0035">
    <property type="entry name" value="PD0035"/>
</dbReference>
<dbReference type="RefSeq" id="NP_001300908.1">
    <property type="nucleotide sequence ID" value="NM_001313979.1"/>
</dbReference>
<dbReference type="RefSeq" id="NP_001345243.1">
    <molecule id="Q9WTN3-3"/>
    <property type="nucleotide sequence ID" value="NM_001358314.1"/>
</dbReference>
<dbReference type="RefSeq" id="NP_035610.1">
    <molecule id="Q9WTN3-1"/>
    <property type="nucleotide sequence ID" value="NM_011480.4"/>
</dbReference>
<dbReference type="RefSeq" id="XP_006532778.1">
    <property type="nucleotide sequence ID" value="XM_006532715.2"/>
</dbReference>
<dbReference type="SMR" id="Q9WTN3"/>
<dbReference type="BioGRID" id="203495">
    <property type="interactions" value="12"/>
</dbReference>
<dbReference type="FunCoup" id="Q9WTN3">
    <property type="interactions" value="1735"/>
</dbReference>
<dbReference type="IntAct" id="Q9WTN3">
    <property type="interactions" value="6"/>
</dbReference>
<dbReference type="MINT" id="Q9WTN3"/>
<dbReference type="STRING" id="10090.ENSMUSP00000020846"/>
<dbReference type="ChEMBL" id="CHEMBL3616359"/>
<dbReference type="GlyGen" id="Q9WTN3">
    <property type="glycosylation" value="2 sites, 1 O-linked glycan (1 site)"/>
</dbReference>
<dbReference type="iPTMnet" id="Q9WTN3"/>
<dbReference type="PhosphoSitePlus" id="Q9WTN3"/>
<dbReference type="PaxDb" id="10090-ENSMUSP00000020846"/>
<dbReference type="ProteomicsDB" id="254555">
    <molecule id="Q9WTN3-1"/>
</dbReference>
<dbReference type="ProteomicsDB" id="254556">
    <molecule id="Q9WTN3-2"/>
</dbReference>
<dbReference type="ProteomicsDB" id="254557">
    <molecule id="Q9WTN3-3"/>
</dbReference>
<dbReference type="ProteomicsDB" id="254558">
    <molecule id="Q9WTN3-4"/>
</dbReference>
<dbReference type="Antibodypedia" id="3952">
    <property type="antibodies" value="654 antibodies from 39 providers"/>
</dbReference>
<dbReference type="DNASU" id="20787"/>
<dbReference type="Ensembl" id="ENSMUST00000020846.8">
    <molecule id="Q9WTN3-1"/>
    <property type="protein sequence ID" value="ENSMUSP00000020846.2"/>
    <property type="gene ID" value="ENSMUSG00000020538.16"/>
</dbReference>
<dbReference type="GeneID" id="20787"/>
<dbReference type="KEGG" id="mmu:20787"/>
<dbReference type="UCSC" id="uc007jfn.1">
    <molecule id="Q9WTN3-1"/>
    <property type="organism name" value="mouse"/>
</dbReference>
<dbReference type="AGR" id="MGI:107606"/>
<dbReference type="CTD" id="6720"/>
<dbReference type="MGI" id="MGI:107606">
    <property type="gene designation" value="Srebf1"/>
</dbReference>
<dbReference type="VEuPathDB" id="HostDB:ENSMUSG00000020538"/>
<dbReference type="eggNOG" id="KOG2588">
    <property type="taxonomic scope" value="Eukaryota"/>
</dbReference>
<dbReference type="GeneTree" id="ENSGT00940000159156"/>
<dbReference type="InParanoid" id="Q9WTN3"/>
<dbReference type="OMA" id="QLCQHIP"/>
<dbReference type="OrthoDB" id="2133190at2759"/>
<dbReference type="PhylomeDB" id="Q9WTN3"/>
<dbReference type="TreeFam" id="TF313894"/>
<dbReference type="Reactome" id="R-MMU-1655829">
    <molecule id="Q9WTN3-1"/>
    <property type="pathway name" value="Regulation of cholesterol biosynthesis by SREBP (SREBF)"/>
</dbReference>
<dbReference type="Reactome" id="R-MMU-191273">
    <molecule id="Q9WTN3-1"/>
    <property type="pathway name" value="Cholesterol biosynthesis"/>
</dbReference>
<dbReference type="BioGRID-ORCS" id="20787">
    <property type="hits" value="5 hits in 81 CRISPR screens"/>
</dbReference>
<dbReference type="ChiTaRS" id="Srebf1">
    <property type="organism name" value="mouse"/>
</dbReference>
<dbReference type="PRO" id="PR:Q9WTN3"/>
<dbReference type="Proteomes" id="UP000000589">
    <property type="component" value="Chromosome 11"/>
</dbReference>
<dbReference type="RNAct" id="Q9WTN3">
    <property type="molecule type" value="protein"/>
</dbReference>
<dbReference type="Bgee" id="ENSMUSG00000020538">
    <property type="expression patterns" value="Expressed in white adipose tissue and 139 other cell types or tissues"/>
</dbReference>
<dbReference type="ExpressionAtlas" id="Q9WTN3">
    <property type="expression patterns" value="baseline and differential"/>
</dbReference>
<dbReference type="GO" id="GO:0005737">
    <property type="term" value="C:cytoplasm"/>
    <property type="evidence" value="ECO:0000314"/>
    <property type="project" value="UniProtKB"/>
</dbReference>
<dbReference type="GO" id="GO:0005789">
    <property type="term" value="C:endoplasmic reticulum membrane"/>
    <property type="evidence" value="ECO:0007669"/>
    <property type="project" value="UniProtKB-SubCell"/>
</dbReference>
<dbReference type="GO" id="GO:0012507">
    <property type="term" value="C:ER to Golgi transport vesicle membrane"/>
    <property type="evidence" value="ECO:0007669"/>
    <property type="project" value="UniProtKB-SubCell"/>
</dbReference>
<dbReference type="GO" id="GO:0000139">
    <property type="term" value="C:Golgi membrane"/>
    <property type="evidence" value="ECO:0000304"/>
    <property type="project" value="Reactome"/>
</dbReference>
<dbReference type="GO" id="GO:0016020">
    <property type="term" value="C:membrane"/>
    <property type="evidence" value="ECO:0000314"/>
    <property type="project" value="BHF-UCL"/>
</dbReference>
<dbReference type="GO" id="GO:0005654">
    <property type="term" value="C:nucleoplasm"/>
    <property type="evidence" value="ECO:0000304"/>
    <property type="project" value="Reactome"/>
</dbReference>
<dbReference type="GO" id="GO:0005634">
    <property type="term" value="C:nucleus"/>
    <property type="evidence" value="ECO:0000314"/>
    <property type="project" value="UniProtKB"/>
</dbReference>
<dbReference type="GO" id="GO:0032991">
    <property type="term" value="C:protein-containing complex"/>
    <property type="evidence" value="ECO:0007669"/>
    <property type="project" value="Ensembl"/>
</dbReference>
<dbReference type="GO" id="GO:0003682">
    <property type="term" value="F:chromatin binding"/>
    <property type="evidence" value="ECO:0000314"/>
    <property type="project" value="MGI"/>
</dbReference>
<dbReference type="GO" id="GO:0003677">
    <property type="term" value="F:DNA binding"/>
    <property type="evidence" value="ECO:0000314"/>
    <property type="project" value="UniProtKB"/>
</dbReference>
<dbReference type="GO" id="GO:0001228">
    <property type="term" value="F:DNA-binding transcription activator activity, RNA polymerase II-specific"/>
    <property type="evidence" value="ECO:0007669"/>
    <property type="project" value="Ensembl"/>
</dbReference>
<dbReference type="GO" id="GO:0003700">
    <property type="term" value="F:DNA-binding transcription factor activity"/>
    <property type="evidence" value="ECO:0000250"/>
    <property type="project" value="HGNC-UCL"/>
</dbReference>
<dbReference type="GO" id="GO:0000981">
    <property type="term" value="F:DNA-binding transcription factor activity, RNA polymerase II-specific"/>
    <property type="evidence" value="ECO:0000314"/>
    <property type="project" value="UniProtKB"/>
</dbReference>
<dbReference type="GO" id="GO:0004879">
    <property type="term" value="F:nuclear receptor activity"/>
    <property type="evidence" value="ECO:0007669"/>
    <property type="project" value="Ensembl"/>
</dbReference>
<dbReference type="GO" id="GO:0046983">
    <property type="term" value="F:protein dimerization activity"/>
    <property type="evidence" value="ECO:0007669"/>
    <property type="project" value="InterPro"/>
</dbReference>
<dbReference type="GO" id="GO:0019901">
    <property type="term" value="F:protein kinase binding"/>
    <property type="evidence" value="ECO:0000353"/>
    <property type="project" value="UniProtKB"/>
</dbReference>
<dbReference type="GO" id="GO:0044877">
    <property type="term" value="F:protein-containing complex binding"/>
    <property type="evidence" value="ECO:0007669"/>
    <property type="project" value="Ensembl"/>
</dbReference>
<dbReference type="GO" id="GO:0000978">
    <property type="term" value="F:RNA polymerase II cis-regulatory region sequence-specific DNA binding"/>
    <property type="evidence" value="ECO:0000314"/>
    <property type="project" value="MGI"/>
</dbReference>
<dbReference type="GO" id="GO:0043565">
    <property type="term" value="F:sequence-specific DNA binding"/>
    <property type="evidence" value="ECO:0000314"/>
    <property type="project" value="MGI"/>
</dbReference>
<dbReference type="GO" id="GO:0032810">
    <property type="term" value="F:sterol response element binding"/>
    <property type="evidence" value="ECO:0000250"/>
    <property type="project" value="HGNC-UCL"/>
</dbReference>
<dbReference type="GO" id="GO:0000976">
    <property type="term" value="F:transcription cis-regulatory region binding"/>
    <property type="evidence" value="ECO:0000314"/>
    <property type="project" value="MGI"/>
</dbReference>
<dbReference type="GO" id="GO:0001221">
    <property type="term" value="F:transcription coregulator binding"/>
    <property type="evidence" value="ECO:0007669"/>
    <property type="project" value="Ensembl"/>
</dbReference>
<dbReference type="GO" id="GO:0071398">
    <property type="term" value="P:cellular response to fatty acid"/>
    <property type="evidence" value="ECO:0007669"/>
    <property type="project" value="Ensembl"/>
</dbReference>
<dbReference type="GO" id="GO:0009267">
    <property type="term" value="P:cellular response to starvation"/>
    <property type="evidence" value="ECO:0000314"/>
    <property type="project" value="HGNC-UCL"/>
</dbReference>
<dbReference type="GO" id="GO:0006695">
    <property type="term" value="P:cholesterol biosynthetic process"/>
    <property type="evidence" value="ECO:0000315"/>
    <property type="project" value="MGI"/>
</dbReference>
<dbReference type="GO" id="GO:0007623">
    <property type="term" value="P:circadian rhythm"/>
    <property type="evidence" value="ECO:0000270"/>
    <property type="project" value="UniProtKB"/>
</dbReference>
<dbReference type="GO" id="GO:0045444">
    <property type="term" value="P:fat cell differentiation"/>
    <property type="evidence" value="ECO:0000315"/>
    <property type="project" value="MGI"/>
</dbReference>
<dbReference type="GO" id="GO:0008286">
    <property type="term" value="P:insulin receptor signaling pathway"/>
    <property type="evidence" value="ECO:0000314"/>
    <property type="project" value="MGI"/>
</dbReference>
<dbReference type="GO" id="GO:0030073">
    <property type="term" value="P:insulin secretion"/>
    <property type="evidence" value="ECO:0000315"/>
    <property type="project" value="MGI"/>
</dbReference>
<dbReference type="GO" id="GO:0008610">
    <property type="term" value="P:lipid biosynthetic process"/>
    <property type="evidence" value="ECO:0000314"/>
    <property type="project" value="UniProtKB"/>
</dbReference>
<dbReference type="GO" id="GO:0030324">
    <property type="term" value="P:lung development"/>
    <property type="evidence" value="ECO:0007669"/>
    <property type="project" value="Ensembl"/>
</dbReference>
<dbReference type="GO" id="GO:0042789">
    <property type="term" value="P:mRNA transcription by RNA polymerase II"/>
    <property type="evidence" value="ECO:0000314"/>
    <property type="project" value="MGI"/>
</dbReference>
<dbReference type="GO" id="GO:0046676">
    <property type="term" value="P:negative regulation of insulin secretion"/>
    <property type="evidence" value="ECO:0000315"/>
    <property type="project" value="MGI"/>
</dbReference>
<dbReference type="GO" id="GO:0000122">
    <property type="term" value="P:negative regulation of transcription by RNA polymerase II"/>
    <property type="evidence" value="ECO:0000314"/>
    <property type="project" value="MGI"/>
</dbReference>
<dbReference type="GO" id="GO:0090209">
    <property type="term" value="P:negative regulation of triglyceride metabolic process"/>
    <property type="evidence" value="ECO:0007669"/>
    <property type="project" value="Ensembl"/>
</dbReference>
<dbReference type="GO" id="GO:0045542">
    <property type="term" value="P:positive regulation of cholesterol biosynthetic process"/>
    <property type="evidence" value="ECO:0000314"/>
    <property type="project" value="UniProtKB"/>
</dbReference>
<dbReference type="GO" id="GO:0045893">
    <property type="term" value="P:positive regulation of DNA-templated transcription"/>
    <property type="evidence" value="ECO:0000314"/>
    <property type="project" value="BHF-UCL"/>
</dbReference>
<dbReference type="GO" id="GO:0045723">
    <property type="term" value="P:positive regulation of fatty acid biosynthetic process"/>
    <property type="evidence" value="ECO:0000304"/>
    <property type="project" value="BHF-UCL"/>
</dbReference>
<dbReference type="GO" id="GO:0045089">
    <property type="term" value="P:positive regulation of innate immune response"/>
    <property type="evidence" value="ECO:0000315"/>
    <property type="project" value="UniProtKB"/>
</dbReference>
<dbReference type="GO" id="GO:0046889">
    <property type="term" value="P:positive regulation of lipid biosynthetic process"/>
    <property type="evidence" value="ECO:0000315"/>
    <property type="project" value="UniProtKB"/>
</dbReference>
<dbReference type="GO" id="GO:1902895">
    <property type="term" value="P:positive regulation of miRNA transcription"/>
    <property type="evidence" value="ECO:0000314"/>
    <property type="project" value="BHF-UCL"/>
</dbReference>
<dbReference type="GO" id="GO:0045944">
    <property type="term" value="P:positive regulation of transcription by RNA polymerase II"/>
    <property type="evidence" value="ECO:0000314"/>
    <property type="project" value="MGI"/>
</dbReference>
<dbReference type="GO" id="GO:0010867">
    <property type="term" value="P:positive regulation of triglyceride biosynthetic process"/>
    <property type="evidence" value="ECO:0000314"/>
    <property type="project" value="UniProtKB"/>
</dbReference>
<dbReference type="GO" id="GO:0006355">
    <property type="term" value="P:regulation of DNA-templated transcription"/>
    <property type="evidence" value="ECO:0000314"/>
    <property type="project" value="UniProtKB"/>
</dbReference>
<dbReference type="GO" id="GO:0019217">
    <property type="term" value="P:regulation of fatty acid metabolic process"/>
    <property type="evidence" value="ECO:0000315"/>
    <property type="project" value="MGI"/>
</dbReference>
<dbReference type="GO" id="GO:0003062">
    <property type="term" value="P:regulation of heart rate by chemical signal"/>
    <property type="evidence" value="ECO:0000315"/>
    <property type="project" value="MGI"/>
</dbReference>
<dbReference type="GO" id="GO:0050796">
    <property type="term" value="P:regulation of insulin secretion"/>
    <property type="evidence" value="ECO:0000315"/>
    <property type="project" value="MGI"/>
</dbReference>
<dbReference type="GO" id="GO:0010883">
    <property type="term" value="P:regulation of lipid storage"/>
    <property type="evidence" value="ECO:0007669"/>
    <property type="project" value="Ensembl"/>
</dbReference>
<dbReference type="GO" id="GO:1901524">
    <property type="term" value="P:regulation of mitophagy"/>
    <property type="evidence" value="ECO:0007669"/>
    <property type="project" value="Ensembl"/>
</dbReference>
<dbReference type="GO" id="GO:0031647">
    <property type="term" value="P:regulation of protein stability"/>
    <property type="evidence" value="ECO:0007669"/>
    <property type="project" value="Ensembl"/>
</dbReference>
<dbReference type="GO" id="GO:1903214">
    <property type="term" value="P:regulation of protein targeting to mitochondrion"/>
    <property type="evidence" value="ECO:0007669"/>
    <property type="project" value="Ensembl"/>
</dbReference>
<dbReference type="GO" id="GO:0006357">
    <property type="term" value="P:regulation of transcription by RNA polymerase II"/>
    <property type="evidence" value="ECO:0000314"/>
    <property type="project" value="UniProtKB"/>
</dbReference>
<dbReference type="GO" id="GO:0051591">
    <property type="term" value="P:response to cAMP"/>
    <property type="evidence" value="ECO:0007669"/>
    <property type="project" value="Ensembl"/>
</dbReference>
<dbReference type="GO" id="GO:0045471">
    <property type="term" value="P:response to ethanol"/>
    <property type="evidence" value="ECO:0007669"/>
    <property type="project" value="Ensembl"/>
</dbReference>
<dbReference type="GO" id="GO:0032094">
    <property type="term" value="P:response to food"/>
    <property type="evidence" value="ECO:0007669"/>
    <property type="project" value="Ensembl"/>
</dbReference>
<dbReference type="GO" id="GO:0009750">
    <property type="term" value="P:response to fructose"/>
    <property type="evidence" value="ECO:0007669"/>
    <property type="project" value="Ensembl"/>
</dbReference>
<dbReference type="GO" id="GO:0033762">
    <property type="term" value="P:response to glucagon"/>
    <property type="evidence" value="ECO:0007669"/>
    <property type="project" value="Ensembl"/>
</dbReference>
<dbReference type="GO" id="GO:0009749">
    <property type="term" value="P:response to glucose"/>
    <property type="evidence" value="ECO:0000315"/>
    <property type="project" value="MGI"/>
</dbReference>
<dbReference type="GO" id="GO:0007584">
    <property type="term" value="P:response to nutrient"/>
    <property type="evidence" value="ECO:0007669"/>
    <property type="project" value="Ensembl"/>
</dbReference>
<dbReference type="GO" id="GO:0032570">
    <property type="term" value="P:response to progesterone"/>
    <property type="evidence" value="ECO:0007669"/>
    <property type="project" value="Ensembl"/>
</dbReference>
<dbReference type="GO" id="GO:0032526">
    <property type="term" value="P:response to retinoic acid"/>
    <property type="evidence" value="ECO:0007669"/>
    <property type="project" value="Ensembl"/>
</dbReference>
<dbReference type="GO" id="GO:0009410">
    <property type="term" value="P:response to xenobiotic stimulus"/>
    <property type="evidence" value="ECO:0007669"/>
    <property type="project" value="Ensembl"/>
</dbReference>
<dbReference type="GO" id="GO:0032933">
    <property type="term" value="P:SREBP signaling pathway"/>
    <property type="evidence" value="ECO:0007669"/>
    <property type="project" value="Ensembl"/>
</dbReference>
<dbReference type="GO" id="GO:0006366">
    <property type="term" value="P:transcription by RNA polymerase II"/>
    <property type="evidence" value="ECO:0000314"/>
    <property type="project" value="MGI"/>
</dbReference>
<dbReference type="CDD" id="cd18921">
    <property type="entry name" value="bHLHzip_SREBP1"/>
    <property type="match status" value="1"/>
</dbReference>
<dbReference type="FunFam" id="4.10.280.10:FF:000016">
    <property type="entry name" value="Sterol regulatory element-binding transcription factor 1"/>
    <property type="match status" value="1"/>
</dbReference>
<dbReference type="Gene3D" id="4.10.280.10">
    <property type="entry name" value="Helix-loop-helix DNA-binding domain"/>
    <property type="match status" value="1"/>
</dbReference>
<dbReference type="InterPro" id="IPR011598">
    <property type="entry name" value="bHLH_dom"/>
</dbReference>
<dbReference type="InterPro" id="IPR036638">
    <property type="entry name" value="HLH_DNA-bd_sf"/>
</dbReference>
<dbReference type="PANTHER" id="PTHR46062">
    <property type="entry name" value="STEROL REGULATORY ELEMENT-BINDING PROTEIN"/>
    <property type="match status" value="1"/>
</dbReference>
<dbReference type="PANTHER" id="PTHR46062:SF2">
    <property type="entry name" value="STEROL REGULATORY ELEMENT-BINDING PROTEIN 1"/>
    <property type="match status" value="1"/>
</dbReference>
<dbReference type="Pfam" id="PF00010">
    <property type="entry name" value="HLH"/>
    <property type="match status" value="1"/>
</dbReference>
<dbReference type="SMART" id="SM00353">
    <property type="entry name" value="HLH"/>
    <property type="match status" value="1"/>
</dbReference>
<dbReference type="SUPFAM" id="SSF47459">
    <property type="entry name" value="HLH, helix-loop-helix DNA-binding domain"/>
    <property type="match status" value="1"/>
</dbReference>
<dbReference type="PROSITE" id="PS50888">
    <property type="entry name" value="BHLH"/>
    <property type="match status" value="1"/>
</dbReference>
<evidence type="ECO:0000250" key="1">
    <source>
        <dbReference type="UniProtKB" id="P36956"/>
    </source>
</evidence>
<evidence type="ECO:0000250" key="2">
    <source>
        <dbReference type="UniProtKB" id="P56720"/>
    </source>
</evidence>
<evidence type="ECO:0000250" key="3">
    <source>
        <dbReference type="UniProtKB" id="Q12772"/>
    </source>
</evidence>
<evidence type="ECO:0000255" key="4"/>
<evidence type="ECO:0000255" key="5">
    <source>
        <dbReference type="PROSITE-ProRule" id="PRU00981"/>
    </source>
</evidence>
<evidence type="ECO:0000256" key="6">
    <source>
        <dbReference type="SAM" id="MobiDB-lite"/>
    </source>
</evidence>
<evidence type="ECO:0000269" key="7">
    <source>
    </source>
</evidence>
<evidence type="ECO:0000269" key="8">
    <source>
    </source>
</evidence>
<evidence type="ECO:0000269" key="9">
    <source>
    </source>
</evidence>
<evidence type="ECO:0000269" key="10">
    <source>
    </source>
</evidence>
<evidence type="ECO:0000269" key="11">
    <source>
    </source>
</evidence>
<evidence type="ECO:0000269" key="12">
    <source>
    </source>
</evidence>
<evidence type="ECO:0000269" key="13">
    <source>
    </source>
</evidence>
<evidence type="ECO:0000269" key="14">
    <source>
    </source>
</evidence>
<evidence type="ECO:0000269" key="15">
    <source>
    </source>
</evidence>
<evidence type="ECO:0000269" key="16">
    <source>
    </source>
</evidence>
<evidence type="ECO:0000269" key="17">
    <source>
    </source>
</evidence>
<evidence type="ECO:0000269" key="18">
    <source>
    </source>
</evidence>
<evidence type="ECO:0000269" key="19">
    <source>
    </source>
</evidence>
<evidence type="ECO:0000269" key="20">
    <source>
    </source>
</evidence>
<evidence type="ECO:0000269" key="21">
    <source>
    </source>
</evidence>
<evidence type="ECO:0000269" key="22">
    <source>
    </source>
</evidence>
<evidence type="ECO:0000269" key="23">
    <source>
    </source>
</evidence>
<evidence type="ECO:0000269" key="24">
    <source>
    </source>
</evidence>
<evidence type="ECO:0000303" key="25">
    <source>
    </source>
</evidence>
<evidence type="ECO:0000303" key="26">
    <source>
    </source>
</evidence>
<evidence type="ECO:0000303" key="27">
    <source>
    </source>
</evidence>
<evidence type="ECO:0000303" key="28">
    <source>
    </source>
</evidence>
<evidence type="ECO:0000303" key="29">
    <source>
    </source>
</evidence>
<evidence type="ECO:0000305" key="30"/>
<evidence type="ECO:0000312" key="31">
    <source>
        <dbReference type="MGI" id="MGI:107606"/>
    </source>
</evidence>
<evidence type="ECO:0007744" key="32">
    <source>
    </source>
</evidence>
<accession>Q9WTN3</accession>
<accession>Q3U458</accession>
<accession>Q3UDJ3</accession>
<accession>Q5SRX5</accession>
<accession>Q8C733</accession>
<accession>Q99JK7</accession>
<organism>
    <name type="scientific">Mus musculus</name>
    <name type="common">Mouse</name>
    <dbReference type="NCBI Taxonomy" id="10090"/>
    <lineage>
        <taxon>Eukaryota</taxon>
        <taxon>Metazoa</taxon>
        <taxon>Chordata</taxon>
        <taxon>Craniata</taxon>
        <taxon>Vertebrata</taxon>
        <taxon>Euteleostomi</taxon>
        <taxon>Mammalia</taxon>
        <taxon>Eutheria</taxon>
        <taxon>Euarchontoglires</taxon>
        <taxon>Glires</taxon>
        <taxon>Rodentia</taxon>
        <taxon>Myomorpha</taxon>
        <taxon>Muroidea</taxon>
        <taxon>Muridae</taxon>
        <taxon>Murinae</taxon>
        <taxon>Mus</taxon>
        <taxon>Mus</taxon>
    </lineage>
</organism>
<name>SRBP1_MOUSE</name>
<sequence>MDELAFGEAALEQTLAEMCELDTAVLNDIEDMLQLINNQDSDFPGLFDAPYAGGETGDTGPSSPGANSPESFSSASLASSLEAFLGGPKVTPAPLSPPPSAPAALKMYPSVSPFSPGPGIKEEPVPLTILQPAAPQPSPGTLLPPSFPAPPVQLSPAPVLGYSSLPSGFSGTLPGNTQQPPSSLPLAPAPGVLPTPALHTQVQSLASQQPLPASAAPRTNTVTSQVQQVPVVLQPHFIKADSLLLTAVKTDAGATVKTAGISTLAPGTAVQAGPLQTLVSGGTILATVPLVVDTDKLPIHRLAAGSKALGSAQSRGEKRTAHNAIEKRYRSSINDKIVELKDLVVGTEAKLNKSAVLRKAIDYIRFLQHSNQKLKQENLTLRSAHKSKSLKDLVSACGSGGGTDVSMEGMKPEVVETLTPPPSDAGSPSQSSPLSFGSRASSSGGSDSEPDSPAFEDSQVKAQRLPSHSRGMLDRSRLALCVLAFLCLTCNPLASLFGWGILTPSDATGTHRSSGRSMLEAESRDGSNWTQWLLPPLVWLANGLLVLACLALLFVYGEPVTRPHSGPAVHFWRHRKQADLDLARGDFPQAAQQLWLALQALGRPLPTSNLDLACSLLWNLIRHLLQRLWVGRWLAGQAGGLLRDRGLRKDARASARDAAVVYHKLHQLHAMGKYTGGHLAASNLALSALNLAECAGDAISMATLAEIYVAAALRVKTSLPRALHFLTRFFLSSARQACLAQSGSVPLAMQWLCHPVGHRFFVDGDWAVHGAPPESLYSVAGNPVDPLAQVTRLFREHLLERALNCIAQPSPGAADGDREFSDALGYLQLLNSCSDAAGAPACSFSVSSSMAATTGPDPVAKWWASLTAVVIHWLRRDEEAAERLYPLVEHIPQVLQDTERPLPRAALYSFKAARALLDHRKVESSPASLAICEKASGYLRDSLASTPTGSSIDKAMQLLLCDLLLVARTSLWQRQQSPASVQVAHGTSNGPQASALELRGFQHDLSSLRRLAQSFRPAMRRVFLHEATARLMAGASPARTHQLLDRSLRRRAGSSGKGGTTAELEPRPTWREHTEALLLASCYLPPAFLSAPGQRMSMLAEAARTVEKLGDHRLLLDCQQMLLRLGGGTTVTSS</sequence>
<proteinExistence type="evidence at protein level"/>